<protein>
    <recommendedName>
        <fullName>Uncharacterized Golgi apparatus membrane protein-like protein C34D4.4</fullName>
    </recommendedName>
</protein>
<keyword id="KW-0472">Membrane</keyword>
<keyword id="KW-1185">Reference proteome</keyword>
<keyword id="KW-0812">Transmembrane</keyword>
<keyword id="KW-1133">Transmembrane helix</keyword>
<reference key="1">
    <citation type="journal article" date="1998" name="Science">
        <title>Genome sequence of the nematode C. elegans: a platform for investigating biology.</title>
        <authorList>
            <consortium name="The C. elegans sequencing consortium"/>
        </authorList>
    </citation>
    <scope>NUCLEOTIDE SEQUENCE [LARGE SCALE GENOMIC DNA]</scope>
    <source>
        <strain>Bristol N2</strain>
    </source>
</reference>
<comment type="subcellular location">
    <subcellularLocation>
        <location evidence="2">Membrane</location>
        <topology evidence="2">Multi-pass membrane protein</topology>
    </subcellularLocation>
</comment>
<comment type="similarity">
    <text evidence="2">Belongs to the TVP23 family.</text>
</comment>
<sequence>MSGFENDISIGATMTQSQTSQGFSLQMFGKPTIVLAHLSFKGAALFFYFFANFFTNSFIVQFLVILTLLSMDFWTVKNITGRLLVGLRWWNFVDADGNNHWKFESAKDMTRFATIDRRVFWLGLVVGPAAWIFFVVTAFLTLKFEWMIVALLGALMNMANLWGYLRCRWNNTEQMTSYFQKWAFLNVLRRAQQPPQEYQNPVFSA</sequence>
<evidence type="ECO:0000255" key="1"/>
<evidence type="ECO:0000305" key="2"/>
<accession>Q18449</accession>
<accession>G8JY51</accession>
<gene>
    <name type="ORF">C34D4.4</name>
</gene>
<proteinExistence type="inferred from homology"/>
<name>YC2L_CAEEL</name>
<feature type="chain" id="PRO_0000212832" description="Uncharacterized Golgi apparatus membrane protein-like protein C34D4.4">
    <location>
        <begin position="1"/>
        <end position="205"/>
    </location>
</feature>
<feature type="transmembrane region" description="Helical" evidence="1">
    <location>
        <begin position="45"/>
        <end position="65"/>
    </location>
</feature>
<feature type="transmembrane region" description="Helical" evidence="1">
    <location>
        <begin position="119"/>
        <end position="139"/>
    </location>
</feature>
<feature type="transmembrane region" description="Helical" evidence="1">
    <location>
        <begin position="144"/>
        <end position="164"/>
    </location>
</feature>
<dbReference type="EMBL" id="FO080770">
    <property type="protein sequence ID" value="CCD66601.1"/>
    <property type="molecule type" value="Genomic_DNA"/>
</dbReference>
<dbReference type="PIR" id="T29287">
    <property type="entry name" value="T29287"/>
</dbReference>
<dbReference type="RefSeq" id="NP_001040919.1">
    <property type="nucleotide sequence ID" value="NM_001047454.2"/>
</dbReference>
<dbReference type="RefSeq" id="NP_001367620.1">
    <property type="nucleotide sequence ID" value="NM_001380313.3"/>
</dbReference>
<dbReference type="FunCoup" id="Q18449">
    <property type="interactions" value="2673"/>
</dbReference>
<dbReference type="STRING" id="6239.C34D4.4.1"/>
<dbReference type="PaxDb" id="6239-C34D4.4a"/>
<dbReference type="PeptideAtlas" id="Q18449"/>
<dbReference type="EnsemblMetazoa" id="C34D4.4.1">
    <property type="protein sequence ID" value="C34D4.4.1"/>
    <property type="gene ID" value="WBGene00016400"/>
</dbReference>
<dbReference type="GeneID" id="183205"/>
<dbReference type="UCSC" id="C34D4.4a">
    <property type="organism name" value="c. elegans"/>
</dbReference>
<dbReference type="AGR" id="WB:WBGene00016400"/>
<dbReference type="WormBase" id="C34D4.4">
    <property type="protein sequence ID" value="CE39683"/>
    <property type="gene ID" value="WBGene00016400"/>
</dbReference>
<dbReference type="eggNOG" id="KOG3195">
    <property type="taxonomic scope" value="Eukaryota"/>
</dbReference>
<dbReference type="GeneTree" id="ENSGT00390000004428"/>
<dbReference type="HOGENOM" id="CLU_074845_2_0_1"/>
<dbReference type="InParanoid" id="Q18449"/>
<dbReference type="OMA" id="FEWMIVA"/>
<dbReference type="OrthoDB" id="2151161at2759"/>
<dbReference type="PRO" id="PR:Q18449"/>
<dbReference type="Proteomes" id="UP000001940">
    <property type="component" value="Chromosome IV"/>
</dbReference>
<dbReference type="Bgee" id="WBGene00016400">
    <property type="expression patterns" value="Expressed in adult organism and 4 other cell types or tissues"/>
</dbReference>
<dbReference type="GO" id="GO:0000139">
    <property type="term" value="C:Golgi membrane"/>
    <property type="evidence" value="ECO:0000318"/>
    <property type="project" value="GO_Central"/>
</dbReference>
<dbReference type="GO" id="GO:0009306">
    <property type="term" value="P:protein secretion"/>
    <property type="evidence" value="ECO:0000318"/>
    <property type="project" value="GO_Central"/>
</dbReference>
<dbReference type="GO" id="GO:0016192">
    <property type="term" value="P:vesicle-mediated transport"/>
    <property type="evidence" value="ECO:0000318"/>
    <property type="project" value="GO_Central"/>
</dbReference>
<dbReference type="InterPro" id="IPR008564">
    <property type="entry name" value="TVP23-like"/>
</dbReference>
<dbReference type="PANTHER" id="PTHR13019">
    <property type="entry name" value="GOLGI APPARATUS MEMBRANE PROTEIN TVP23"/>
    <property type="match status" value="1"/>
</dbReference>
<dbReference type="PANTHER" id="PTHR13019:SF25">
    <property type="entry name" value="GOLGI APPARATUS MEMBRANE PROTEIN TVP23 HOMOLOG"/>
    <property type="match status" value="1"/>
</dbReference>
<dbReference type="Pfam" id="PF05832">
    <property type="entry name" value="DUF846"/>
    <property type="match status" value="1"/>
</dbReference>
<organism>
    <name type="scientific">Caenorhabditis elegans</name>
    <dbReference type="NCBI Taxonomy" id="6239"/>
    <lineage>
        <taxon>Eukaryota</taxon>
        <taxon>Metazoa</taxon>
        <taxon>Ecdysozoa</taxon>
        <taxon>Nematoda</taxon>
        <taxon>Chromadorea</taxon>
        <taxon>Rhabditida</taxon>
        <taxon>Rhabditina</taxon>
        <taxon>Rhabditomorpha</taxon>
        <taxon>Rhabditoidea</taxon>
        <taxon>Rhabditidae</taxon>
        <taxon>Peloderinae</taxon>
        <taxon>Caenorhabditis</taxon>
    </lineage>
</organism>